<sequence length="215" mass="24512">MQSLITYIALVFSLFVSSAIGLHLEVPALPNPQPVCIRDFVQENQMVVVNIKTDGSKGDGQRLDLKVTDSLGNEYRNKKDVVGHANVAFTSQHNAAIDICLTNYLDNKWSKHQQTVRSVELDIESGAAARDWNALQASEKLKPVEVELKRIESITEEIVEELRYLKAREERMRDTNESTNSRVKWFSIVVIASLVGFGVWQIQYLRHYFKVKHII</sequence>
<evidence type="ECO:0000250" key="1"/>
<evidence type="ECO:0000255" key="2"/>
<evidence type="ECO:0000255" key="3">
    <source>
        <dbReference type="PROSITE-ProRule" id="PRU00096"/>
    </source>
</evidence>
<evidence type="ECO:0000305" key="4"/>
<keyword id="KW-0256">Endoplasmic reticulum</keyword>
<keyword id="KW-0931">ER-Golgi transport</keyword>
<keyword id="KW-0333">Golgi apparatus</keyword>
<keyword id="KW-0472">Membrane</keyword>
<keyword id="KW-0653">Protein transport</keyword>
<keyword id="KW-1185">Reference proteome</keyword>
<keyword id="KW-0732">Signal</keyword>
<keyword id="KW-0812">Transmembrane</keyword>
<keyword id="KW-1133">Transmembrane helix</keyword>
<keyword id="KW-0813">Transport</keyword>
<dbReference type="EMBL" id="CP017625">
    <property type="protein sequence ID" value="AOW28632.1"/>
    <property type="molecule type" value="Genomic_DNA"/>
</dbReference>
<dbReference type="RefSeq" id="XP_716074.1">
    <property type="nucleotide sequence ID" value="XM_710981.1"/>
</dbReference>
<dbReference type="SMR" id="Q5A302"/>
<dbReference type="FunCoup" id="Q5A302">
    <property type="interactions" value="1189"/>
</dbReference>
<dbReference type="STRING" id="237561.Q5A302"/>
<dbReference type="EnsemblFungi" id="C3_06250W_A-T">
    <property type="protein sequence ID" value="C3_06250W_A-T-p1"/>
    <property type="gene ID" value="C3_06250W_A"/>
</dbReference>
<dbReference type="GeneID" id="3642243"/>
<dbReference type="KEGG" id="cal:CAALFM_C306250WA"/>
<dbReference type="CGD" id="CAL0000183368">
    <property type="gene designation" value="ERV25"/>
</dbReference>
<dbReference type="VEuPathDB" id="FungiDB:C3_06250W_A"/>
<dbReference type="eggNOG" id="KOG1691">
    <property type="taxonomic scope" value="Eukaryota"/>
</dbReference>
<dbReference type="HOGENOM" id="CLU_066963_3_0_1"/>
<dbReference type="InParanoid" id="Q5A302"/>
<dbReference type="OMA" id="DVFEACF"/>
<dbReference type="OrthoDB" id="759142at2759"/>
<dbReference type="Proteomes" id="UP000000559">
    <property type="component" value="Chromosome 3"/>
</dbReference>
<dbReference type="GO" id="GO:0030134">
    <property type="term" value="C:COPII-coated ER to Golgi transport vesicle"/>
    <property type="evidence" value="ECO:0000318"/>
    <property type="project" value="GO_Central"/>
</dbReference>
<dbReference type="GO" id="GO:0005783">
    <property type="term" value="C:endoplasmic reticulum"/>
    <property type="evidence" value="ECO:0000318"/>
    <property type="project" value="GO_Central"/>
</dbReference>
<dbReference type="GO" id="GO:0005789">
    <property type="term" value="C:endoplasmic reticulum membrane"/>
    <property type="evidence" value="ECO:0007669"/>
    <property type="project" value="UniProtKB-SubCell"/>
</dbReference>
<dbReference type="GO" id="GO:0005793">
    <property type="term" value="C:endoplasmic reticulum-Golgi intermediate compartment"/>
    <property type="evidence" value="ECO:0000318"/>
    <property type="project" value="GO_Central"/>
</dbReference>
<dbReference type="GO" id="GO:0005794">
    <property type="term" value="C:Golgi apparatus"/>
    <property type="evidence" value="ECO:0000318"/>
    <property type="project" value="GO_Central"/>
</dbReference>
<dbReference type="GO" id="GO:0000139">
    <property type="term" value="C:Golgi membrane"/>
    <property type="evidence" value="ECO:0007669"/>
    <property type="project" value="UniProtKB-SubCell"/>
</dbReference>
<dbReference type="GO" id="GO:0005886">
    <property type="term" value="C:plasma membrane"/>
    <property type="evidence" value="ECO:0000314"/>
    <property type="project" value="CGD"/>
</dbReference>
<dbReference type="GO" id="GO:0006888">
    <property type="term" value="P:endoplasmic reticulum to Golgi vesicle-mediated transport"/>
    <property type="evidence" value="ECO:0000318"/>
    <property type="project" value="GO_Central"/>
</dbReference>
<dbReference type="GO" id="GO:0007030">
    <property type="term" value="P:Golgi organization"/>
    <property type="evidence" value="ECO:0000318"/>
    <property type="project" value="GO_Central"/>
</dbReference>
<dbReference type="GO" id="GO:0006886">
    <property type="term" value="P:intracellular protein transport"/>
    <property type="evidence" value="ECO:0000318"/>
    <property type="project" value="GO_Central"/>
</dbReference>
<dbReference type="InterPro" id="IPR015720">
    <property type="entry name" value="Emp24-like"/>
</dbReference>
<dbReference type="InterPro" id="IPR009038">
    <property type="entry name" value="GOLD_dom"/>
</dbReference>
<dbReference type="PANTHER" id="PTHR22811">
    <property type="entry name" value="TRANSMEMBRANE EMP24 DOMAIN-CONTAINING PROTEIN"/>
    <property type="match status" value="1"/>
</dbReference>
<dbReference type="Pfam" id="PF01105">
    <property type="entry name" value="EMP24_GP25L"/>
    <property type="match status" value="1"/>
</dbReference>
<dbReference type="SMART" id="SM01190">
    <property type="entry name" value="EMP24_GP25L"/>
    <property type="match status" value="1"/>
</dbReference>
<dbReference type="PROSITE" id="PS50866">
    <property type="entry name" value="GOLD"/>
    <property type="match status" value="1"/>
</dbReference>
<gene>
    <name type="primary">ERV25</name>
    <name type="ordered locus">CAALFM_C306250WA</name>
    <name type="ORF">CaO19.7409</name>
</gene>
<feature type="signal peptide" evidence="2">
    <location>
        <begin position="1"/>
        <end position="21"/>
    </location>
</feature>
<feature type="chain" id="PRO_0000237689" description="Endoplasmic reticulum vesicle protein 25">
    <location>
        <begin position="22"/>
        <end position="215"/>
    </location>
</feature>
<feature type="topological domain" description="Lumenal" evidence="2">
    <location>
        <begin position="22"/>
        <end position="184"/>
    </location>
</feature>
<feature type="transmembrane region" description="Helical" evidence="2">
    <location>
        <begin position="185"/>
        <end position="205"/>
    </location>
</feature>
<feature type="topological domain" description="Cytoplasmic" evidence="2">
    <location>
        <begin position="206"/>
        <end position="215"/>
    </location>
</feature>
<feature type="domain" description="GOLD" evidence="3">
    <location>
        <begin position="34"/>
        <end position="125"/>
    </location>
</feature>
<proteinExistence type="inferred from homology"/>
<name>TMEDA_CANAL</name>
<reference key="1">
    <citation type="journal article" date="2004" name="Proc. Natl. Acad. Sci. U.S.A.">
        <title>The diploid genome sequence of Candida albicans.</title>
        <authorList>
            <person name="Jones T."/>
            <person name="Federspiel N.A."/>
            <person name="Chibana H."/>
            <person name="Dungan J."/>
            <person name="Kalman S."/>
            <person name="Magee B.B."/>
            <person name="Newport G."/>
            <person name="Thorstenson Y.R."/>
            <person name="Agabian N."/>
            <person name="Magee P.T."/>
            <person name="Davis R.W."/>
            <person name="Scherer S."/>
        </authorList>
    </citation>
    <scope>NUCLEOTIDE SEQUENCE [LARGE SCALE GENOMIC DNA]</scope>
    <source>
        <strain>SC5314 / ATCC MYA-2876</strain>
    </source>
</reference>
<reference key="2">
    <citation type="journal article" date="2007" name="Genome Biol.">
        <title>Assembly of the Candida albicans genome into sixteen supercontigs aligned on the eight chromosomes.</title>
        <authorList>
            <person name="van het Hoog M."/>
            <person name="Rast T.J."/>
            <person name="Martchenko M."/>
            <person name="Grindle S."/>
            <person name="Dignard D."/>
            <person name="Hogues H."/>
            <person name="Cuomo C."/>
            <person name="Berriman M."/>
            <person name="Scherer S."/>
            <person name="Magee B.B."/>
            <person name="Whiteway M."/>
            <person name="Chibana H."/>
            <person name="Nantel A."/>
            <person name="Magee P.T."/>
        </authorList>
    </citation>
    <scope>GENOME REANNOTATION</scope>
    <source>
        <strain>SC5314 / ATCC MYA-2876</strain>
    </source>
</reference>
<reference key="3">
    <citation type="journal article" date="2013" name="Genome Biol.">
        <title>Assembly of a phased diploid Candida albicans genome facilitates allele-specific measurements and provides a simple model for repeat and indel structure.</title>
        <authorList>
            <person name="Muzzey D."/>
            <person name="Schwartz K."/>
            <person name="Weissman J.S."/>
            <person name="Sherlock G."/>
        </authorList>
    </citation>
    <scope>NUCLEOTIDE SEQUENCE [LARGE SCALE GENOMIC DNA]</scope>
    <scope>GENOME REANNOTATION</scope>
    <source>
        <strain>SC5314 / ATCC MYA-2876</strain>
    </source>
</reference>
<accession>Q5A302</accession>
<accession>A0A1D8PKF4</accession>
<protein>
    <recommendedName>
        <fullName>Endoplasmic reticulum vesicle protein 25</fullName>
    </recommendedName>
</protein>
<organism>
    <name type="scientific">Candida albicans (strain SC5314 / ATCC MYA-2876)</name>
    <name type="common">Yeast</name>
    <dbReference type="NCBI Taxonomy" id="237561"/>
    <lineage>
        <taxon>Eukaryota</taxon>
        <taxon>Fungi</taxon>
        <taxon>Dikarya</taxon>
        <taxon>Ascomycota</taxon>
        <taxon>Saccharomycotina</taxon>
        <taxon>Pichiomycetes</taxon>
        <taxon>Debaryomycetaceae</taxon>
        <taxon>Candida/Lodderomyces clade</taxon>
        <taxon>Candida</taxon>
    </lineage>
</organism>
<comment type="function">
    <text evidence="1">Constituent of COPII-coated endoplasmic reticulum-derived transport vesicles. Required for efficient transport of a subset of secretory proteins to the Golgi. Facilitates retrograde transport from the Golgi to the endoplasmic reticulum (By similarity).</text>
</comment>
<comment type="subcellular location">
    <subcellularLocation>
        <location evidence="1">Endoplasmic reticulum membrane</location>
        <topology evidence="1">Single-pass type I membrane protein</topology>
    </subcellularLocation>
    <subcellularLocation>
        <location evidence="1">Golgi apparatus membrane</location>
        <topology evidence="1">Single-pass type I membrane protein</topology>
    </subcellularLocation>
    <text evidence="1">Recycles between endoplasmic reticulum and Golgi.</text>
</comment>
<comment type="similarity">
    <text evidence="4">Belongs to the EMP24/GP25L family.</text>
</comment>